<sequence>MARTTPIERYRNIGICAHVDAGKTTTTERVLFYTGLSHKIGEVHDGAATTDWMVQEQERGITITSAAVTTFWRGMDAQFTEHRINIIDTPGHVDFTIEVERSLRVLDGAVVVFCGSSGVEPQSETVWRQADKYRVPRLVFVNKMDRAGADFERVVKQIRTRLGATCVPIQLNIGAEENFTGVIDLIKMKAINWNEADQGMTFTYEEIPASLAAKAAEMHEYLVEAAAEASDELMDKYLEEGTLSEDEIKKALRQRTINNEIVLATCGSAFKNKGVQAVLDAVVEFLPAPVDVPPIKGIDDDEQEVERPSDDNAPFAALAFKIATDPFVGTLTFIRVYSGVLESGSGVYNSVKQKRERIGRIVQMHANDRTELKEVRAGDIAAAIGLKEVTTGDTLCDPDHKVILERMEFPEPVITIAVEPKSKADQDKMGIALQKLAAEDPSFRVETDEESSQTLISGMGELHLDIIVDRMRREFGVECNVGKPQVAYRETIRASVEAEGKFVRQSGGRGQFGHVWLKLEPNEEGAGYEFINAIVGGVVPREFIPAVDKGIQEQMKNGVLAGFPVLDVKVTLFDGSYHDVDSNEMAFKIAGSMGFKKGALEANPVLLEPCMKVEVTTPENYMGDVVGDLNRRRGLIEGMDDGFGGIKIVHAVVPLSEMFGYATDLRSATQGRASYSMEFLKYSDAPQNIAKAIIESRS</sequence>
<comment type="function">
    <text evidence="1">Catalyzes the GTP-dependent ribosomal translocation step during translation elongation. During this step, the ribosome changes from the pre-translocational (PRE) to the post-translocational (POST) state as the newly formed A-site-bound peptidyl-tRNA and P-site-bound deacylated tRNA move to the P and E sites, respectively. Catalyzes the coordinated movement of the two tRNA molecules, the mRNA and conformational changes in the ribosome.</text>
</comment>
<comment type="subcellular location">
    <subcellularLocation>
        <location evidence="1">Cytoplasm</location>
    </subcellularLocation>
</comment>
<comment type="similarity">
    <text evidence="1">Belongs to the TRAFAC class translation factor GTPase superfamily. Classic translation factor GTPase family. EF-G/EF-2 subfamily.</text>
</comment>
<reference key="1">
    <citation type="submission" date="2006-08" db="EMBL/GenBank/DDBJ databases">
        <title>Complete sequence of Shewanella sp. MR-4.</title>
        <authorList>
            <consortium name="US DOE Joint Genome Institute"/>
            <person name="Copeland A."/>
            <person name="Lucas S."/>
            <person name="Lapidus A."/>
            <person name="Barry K."/>
            <person name="Detter J.C."/>
            <person name="Glavina del Rio T."/>
            <person name="Hammon N."/>
            <person name="Israni S."/>
            <person name="Dalin E."/>
            <person name="Tice H."/>
            <person name="Pitluck S."/>
            <person name="Kiss H."/>
            <person name="Brettin T."/>
            <person name="Bruce D."/>
            <person name="Han C."/>
            <person name="Tapia R."/>
            <person name="Gilna P."/>
            <person name="Schmutz J."/>
            <person name="Larimer F."/>
            <person name="Land M."/>
            <person name="Hauser L."/>
            <person name="Kyrpides N."/>
            <person name="Mikhailova N."/>
            <person name="Nealson K."/>
            <person name="Konstantinidis K."/>
            <person name="Klappenbach J."/>
            <person name="Tiedje J."/>
            <person name="Richardson P."/>
        </authorList>
    </citation>
    <scope>NUCLEOTIDE SEQUENCE [LARGE SCALE GENOMIC DNA]</scope>
    <source>
        <strain>MR-4</strain>
    </source>
</reference>
<name>EFG1_SHESM</name>
<dbReference type="EMBL" id="CP000446">
    <property type="protein sequence ID" value="ABI37277.1"/>
    <property type="molecule type" value="Genomic_DNA"/>
</dbReference>
<dbReference type="RefSeq" id="WP_011621024.1">
    <property type="nucleotide sequence ID" value="NC_008321.1"/>
</dbReference>
<dbReference type="SMR" id="Q0HNU0"/>
<dbReference type="KEGG" id="she:Shewmr4_0196"/>
<dbReference type="HOGENOM" id="CLU_002794_4_1_6"/>
<dbReference type="GO" id="GO:0005737">
    <property type="term" value="C:cytoplasm"/>
    <property type="evidence" value="ECO:0007669"/>
    <property type="project" value="UniProtKB-SubCell"/>
</dbReference>
<dbReference type="GO" id="GO:0005525">
    <property type="term" value="F:GTP binding"/>
    <property type="evidence" value="ECO:0007669"/>
    <property type="project" value="UniProtKB-UniRule"/>
</dbReference>
<dbReference type="GO" id="GO:0003924">
    <property type="term" value="F:GTPase activity"/>
    <property type="evidence" value="ECO:0007669"/>
    <property type="project" value="InterPro"/>
</dbReference>
<dbReference type="GO" id="GO:0097216">
    <property type="term" value="F:guanosine tetraphosphate binding"/>
    <property type="evidence" value="ECO:0007669"/>
    <property type="project" value="UniProtKB-ARBA"/>
</dbReference>
<dbReference type="GO" id="GO:0003746">
    <property type="term" value="F:translation elongation factor activity"/>
    <property type="evidence" value="ECO:0007669"/>
    <property type="project" value="UniProtKB-UniRule"/>
</dbReference>
<dbReference type="GO" id="GO:0032790">
    <property type="term" value="P:ribosome disassembly"/>
    <property type="evidence" value="ECO:0007669"/>
    <property type="project" value="TreeGrafter"/>
</dbReference>
<dbReference type="CDD" id="cd01886">
    <property type="entry name" value="EF-G"/>
    <property type="match status" value="1"/>
</dbReference>
<dbReference type="CDD" id="cd16262">
    <property type="entry name" value="EFG_III"/>
    <property type="match status" value="1"/>
</dbReference>
<dbReference type="CDD" id="cd01434">
    <property type="entry name" value="EFG_mtEFG1_IV"/>
    <property type="match status" value="1"/>
</dbReference>
<dbReference type="CDD" id="cd03713">
    <property type="entry name" value="EFG_mtEFG_C"/>
    <property type="match status" value="1"/>
</dbReference>
<dbReference type="CDD" id="cd04088">
    <property type="entry name" value="EFG_mtEFG_II"/>
    <property type="match status" value="1"/>
</dbReference>
<dbReference type="FunFam" id="2.40.30.10:FF:000006">
    <property type="entry name" value="Elongation factor G"/>
    <property type="match status" value="1"/>
</dbReference>
<dbReference type="FunFam" id="3.30.230.10:FF:000003">
    <property type="entry name" value="Elongation factor G"/>
    <property type="match status" value="1"/>
</dbReference>
<dbReference type="FunFam" id="3.30.70.240:FF:000001">
    <property type="entry name" value="Elongation factor G"/>
    <property type="match status" value="1"/>
</dbReference>
<dbReference type="FunFam" id="3.30.70.870:FF:000001">
    <property type="entry name" value="Elongation factor G"/>
    <property type="match status" value="1"/>
</dbReference>
<dbReference type="FunFam" id="3.40.50.300:FF:000029">
    <property type="entry name" value="Elongation factor G"/>
    <property type="match status" value="1"/>
</dbReference>
<dbReference type="Gene3D" id="3.30.230.10">
    <property type="match status" value="1"/>
</dbReference>
<dbReference type="Gene3D" id="3.30.70.240">
    <property type="match status" value="1"/>
</dbReference>
<dbReference type="Gene3D" id="3.30.70.870">
    <property type="entry name" value="Elongation Factor G (Translational Gtpase), domain 3"/>
    <property type="match status" value="1"/>
</dbReference>
<dbReference type="Gene3D" id="3.40.50.300">
    <property type="entry name" value="P-loop containing nucleotide triphosphate hydrolases"/>
    <property type="match status" value="1"/>
</dbReference>
<dbReference type="Gene3D" id="2.40.30.10">
    <property type="entry name" value="Translation factors"/>
    <property type="match status" value="1"/>
</dbReference>
<dbReference type="HAMAP" id="MF_00054_B">
    <property type="entry name" value="EF_G_EF_2_B"/>
    <property type="match status" value="1"/>
</dbReference>
<dbReference type="InterPro" id="IPR041095">
    <property type="entry name" value="EFG_II"/>
</dbReference>
<dbReference type="InterPro" id="IPR009022">
    <property type="entry name" value="EFG_III"/>
</dbReference>
<dbReference type="InterPro" id="IPR035647">
    <property type="entry name" value="EFG_III/V"/>
</dbReference>
<dbReference type="InterPro" id="IPR047872">
    <property type="entry name" value="EFG_IV"/>
</dbReference>
<dbReference type="InterPro" id="IPR035649">
    <property type="entry name" value="EFG_V"/>
</dbReference>
<dbReference type="InterPro" id="IPR000640">
    <property type="entry name" value="EFG_V-like"/>
</dbReference>
<dbReference type="InterPro" id="IPR004161">
    <property type="entry name" value="EFTu-like_2"/>
</dbReference>
<dbReference type="InterPro" id="IPR031157">
    <property type="entry name" value="G_TR_CS"/>
</dbReference>
<dbReference type="InterPro" id="IPR027417">
    <property type="entry name" value="P-loop_NTPase"/>
</dbReference>
<dbReference type="InterPro" id="IPR020568">
    <property type="entry name" value="Ribosomal_Su5_D2-typ_SF"/>
</dbReference>
<dbReference type="InterPro" id="IPR014721">
    <property type="entry name" value="Ribsml_uS5_D2-typ_fold_subgr"/>
</dbReference>
<dbReference type="InterPro" id="IPR005225">
    <property type="entry name" value="Small_GTP-bd"/>
</dbReference>
<dbReference type="InterPro" id="IPR000795">
    <property type="entry name" value="T_Tr_GTP-bd_dom"/>
</dbReference>
<dbReference type="InterPro" id="IPR009000">
    <property type="entry name" value="Transl_B-barrel_sf"/>
</dbReference>
<dbReference type="InterPro" id="IPR004540">
    <property type="entry name" value="Transl_elong_EFG/EF2"/>
</dbReference>
<dbReference type="InterPro" id="IPR005517">
    <property type="entry name" value="Transl_elong_EFG/EF2_IV"/>
</dbReference>
<dbReference type="NCBIfam" id="TIGR00484">
    <property type="entry name" value="EF-G"/>
    <property type="match status" value="1"/>
</dbReference>
<dbReference type="NCBIfam" id="NF009381">
    <property type="entry name" value="PRK12740.1-5"/>
    <property type="match status" value="1"/>
</dbReference>
<dbReference type="NCBIfam" id="TIGR00231">
    <property type="entry name" value="small_GTP"/>
    <property type="match status" value="1"/>
</dbReference>
<dbReference type="PANTHER" id="PTHR43261:SF1">
    <property type="entry name" value="RIBOSOME-RELEASING FACTOR 2, MITOCHONDRIAL"/>
    <property type="match status" value="1"/>
</dbReference>
<dbReference type="PANTHER" id="PTHR43261">
    <property type="entry name" value="TRANSLATION ELONGATION FACTOR G-RELATED"/>
    <property type="match status" value="1"/>
</dbReference>
<dbReference type="Pfam" id="PF00679">
    <property type="entry name" value="EFG_C"/>
    <property type="match status" value="1"/>
</dbReference>
<dbReference type="Pfam" id="PF14492">
    <property type="entry name" value="EFG_III"/>
    <property type="match status" value="1"/>
</dbReference>
<dbReference type="Pfam" id="PF03764">
    <property type="entry name" value="EFG_IV"/>
    <property type="match status" value="1"/>
</dbReference>
<dbReference type="Pfam" id="PF00009">
    <property type="entry name" value="GTP_EFTU"/>
    <property type="match status" value="1"/>
</dbReference>
<dbReference type="Pfam" id="PF03144">
    <property type="entry name" value="GTP_EFTU_D2"/>
    <property type="match status" value="1"/>
</dbReference>
<dbReference type="PRINTS" id="PR00315">
    <property type="entry name" value="ELONGATNFCT"/>
</dbReference>
<dbReference type="SMART" id="SM00838">
    <property type="entry name" value="EFG_C"/>
    <property type="match status" value="1"/>
</dbReference>
<dbReference type="SMART" id="SM00889">
    <property type="entry name" value="EFG_IV"/>
    <property type="match status" value="1"/>
</dbReference>
<dbReference type="SUPFAM" id="SSF54980">
    <property type="entry name" value="EF-G C-terminal domain-like"/>
    <property type="match status" value="2"/>
</dbReference>
<dbReference type="SUPFAM" id="SSF52540">
    <property type="entry name" value="P-loop containing nucleoside triphosphate hydrolases"/>
    <property type="match status" value="1"/>
</dbReference>
<dbReference type="SUPFAM" id="SSF54211">
    <property type="entry name" value="Ribosomal protein S5 domain 2-like"/>
    <property type="match status" value="1"/>
</dbReference>
<dbReference type="SUPFAM" id="SSF50447">
    <property type="entry name" value="Translation proteins"/>
    <property type="match status" value="1"/>
</dbReference>
<dbReference type="PROSITE" id="PS00301">
    <property type="entry name" value="G_TR_1"/>
    <property type="match status" value="1"/>
</dbReference>
<dbReference type="PROSITE" id="PS51722">
    <property type="entry name" value="G_TR_2"/>
    <property type="match status" value="1"/>
</dbReference>
<keyword id="KW-0963">Cytoplasm</keyword>
<keyword id="KW-0251">Elongation factor</keyword>
<keyword id="KW-0342">GTP-binding</keyword>
<keyword id="KW-0547">Nucleotide-binding</keyword>
<keyword id="KW-0648">Protein biosynthesis</keyword>
<protein>
    <recommendedName>
        <fullName evidence="1">Elongation factor G 1</fullName>
        <shortName evidence="1">EF-G 1</shortName>
    </recommendedName>
</protein>
<proteinExistence type="inferred from homology"/>
<accession>Q0HNU0</accession>
<evidence type="ECO:0000255" key="1">
    <source>
        <dbReference type="HAMAP-Rule" id="MF_00054"/>
    </source>
</evidence>
<feature type="chain" id="PRO_0000263507" description="Elongation factor G 1">
    <location>
        <begin position="1"/>
        <end position="698"/>
    </location>
</feature>
<feature type="domain" description="tr-type G">
    <location>
        <begin position="8"/>
        <end position="290"/>
    </location>
</feature>
<feature type="binding site" evidence="1">
    <location>
        <begin position="17"/>
        <end position="24"/>
    </location>
    <ligand>
        <name>GTP</name>
        <dbReference type="ChEBI" id="CHEBI:37565"/>
    </ligand>
</feature>
<feature type="binding site" evidence="1">
    <location>
        <begin position="88"/>
        <end position="92"/>
    </location>
    <ligand>
        <name>GTP</name>
        <dbReference type="ChEBI" id="CHEBI:37565"/>
    </ligand>
</feature>
<feature type="binding site" evidence="1">
    <location>
        <begin position="142"/>
        <end position="145"/>
    </location>
    <ligand>
        <name>GTP</name>
        <dbReference type="ChEBI" id="CHEBI:37565"/>
    </ligand>
</feature>
<gene>
    <name evidence="1" type="primary">fusA1</name>
    <name type="ordered locus">Shewmr4_0196</name>
</gene>
<organism>
    <name type="scientific">Shewanella sp. (strain MR-4)</name>
    <dbReference type="NCBI Taxonomy" id="60480"/>
    <lineage>
        <taxon>Bacteria</taxon>
        <taxon>Pseudomonadati</taxon>
        <taxon>Pseudomonadota</taxon>
        <taxon>Gammaproteobacteria</taxon>
        <taxon>Alteromonadales</taxon>
        <taxon>Shewanellaceae</taxon>
        <taxon>Shewanella</taxon>
    </lineage>
</organism>